<comment type="function">
    <text evidence="1">Possible transcriptional activator.</text>
</comment>
<comment type="subcellular location">
    <subcellularLocation>
        <location evidence="5">Nucleus</location>
    </subcellularLocation>
</comment>
<comment type="tissue specificity">
    <text evidence="4">Localized to the animal hemisphere of early cleavage stage embryos. Zygotic expression is restricted to the dorsal part of the epibranchial placodes of the head within a region located near the tip of the first, second and third visceral pouch.</text>
</comment>
<comment type="developmental stage">
    <text evidence="4">Expressed both maternally and zygotically. Maternal levels decrease rapidly during the early cleavage stages. Zygotic expression begins at neurulation.</text>
</comment>
<protein>
    <recommendedName>
        <fullName>Forkhead box protein I2-A</fullName>
    </recommendedName>
    <alternativeName>
        <fullName>XlFoxI2-A</fullName>
    </alternativeName>
</protein>
<name>FXI2A_XENLA</name>
<dbReference type="EMBL" id="AJ868112">
    <property type="protein sequence ID" value="CAI30462.1"/>
    <property type="molecule type" value="mRNA"/>
</dbReference>
<dbReference type="RefSeq" id="NP_001089009.1">
    <property type="nucleotide sequence ID" value="NM_001095540.1"/>
</dbReference>
<dbReference type="SMR" id="Q5NDM2"/>
<dbReference type="GeneID" id="496395"/>
<dbReference type="KEGG" id="xla:496395"/>
<dbReference type="AGR" id="Xenbase:XB-GENE-982127"/>
<dbReference type="CTD" id="496395"/>
<dbReference type="Xenbase" id="XB-GENE-982127">
    <property type="gene designation" value="foxi2.S"/>
</dbReference>
<dbReference type="OrthoDB" id="5402974at2759"/>
<dbReference type="Proteomes" id="UP000186698">
    <property type="component" value="Chromosome 7S"/>
</dbReference>
<dbReference type="Bgee" id="496395">
    <property type="expression patterns" value="Expressed in blastula and 7 other cell types or tissues"/>
</dbReference>
<dbReference type="GO" id="GO:0005634">
    <property type="term" value="C:nucleus"/>
    <property type="evidence" value="ECO:0000250"/>
    <property type="project" value="UniProtKB"/>
</dbReference>
<dbReference type="GO" id="GO:0000981">
    <property type="term" value="F:DNA-binding transcription factor activity, RNA polymerase II-specific"/>
    <property type="evidence" value="ECO:0000318"/>
    <property type="project" value="GO_Central"/>
</dbReference>
<dbReference type="GO" id="GO:0000978">
    <property type="term" value="F:RNA polymerase II cis-regulatory region sequence-specific DNA binding"/>
    <property type="evidence" value="ECO:0000318"/>
    <property type="project" value="GO_Central"/>
</dbReference>
<dbReference type="GO" id="GO:0009653">
    <property type="term" value="P:anatomical structure morphogenesis"/>
    <property type="evidence" value="ECO:0000318"/>
    <property type="project" value="GO_Central"/>
</dbReference>
<dbReference type="GO" id="GO:0030154">
    <property type="term" value="P:cell differentiation"/>
    <property type="evidence" value="ECO:0000318"/>
    <property type="project" value="GO_Central"/>
</dbReference>
<dbReference type="GO" id="GO:0006357">
    <property type="term" value="P:regulation of transcription by RNA polymerase II"/>
    <property type="evidence" value="ECO:0000318"/>
    <property type="project" value="GO_Central"/>
</dbReference>
<dbReference type="FunFam" id="1.10.10.10:FF:000016">
    <property type="entry name" value="Forkhead box protein I1"/>
    <property type="match status" value="1"/>
</dbReference>
<dbReference type="Gene3D" id="1.10.10.10">
    <property type="entry name" value="Winged helix-like DNA-binding domain superfamily/Winged helix DNA-binding domain"/>
    <property type="match status" value="1"/>
</dbReference>
<dbReference type="InterPro" id="IPR001766">
    <property type="entry name" value="Fork_head_dom"/>
</dbReference>
<dbReference type="InterPro" id="IPR050211">
    <property type="entry name" value="FOX_domain-containing"/>
</dbReference>
<dbReference type="InterPro" id="IPR018122">
    <property type="entry name" value="TF_fork_head_CS_1"/>
</dbReference>
<dbReference type="InterPro" id="IPR030456">
    <property type="entry name" value="TF_fork_head_CS_2"/>
</dbReference>
<dbReference type="InterPro" id="IPR036388">
    <property type="entry name" value="WH-like_DNA-bd_sf"/>
</dbReference>
<dbReference type="InterPro" id="IPR036390">
    <property type="entry name" value="WH_DNA-bd_sf"/>
</dbReference>
<dbReference type="PANTHER" id="PTHR11829">
    <property type="entry name" value="FORKHEAD BOX PROTEIN"/>
    <property type="match status" value="1"/>
</dbReference>
<dbReference type="PANTHER" id="PTHR11829:SF397">
    <property type="entry name" value="FORKHEAD BOX PROTEIN I2"/>
    <property type="match status" value="1"/>
</dbReference>
<dbReference type="Pfam" id="PF00250">
    <property type="entry name" value="Forkhead"/>
    <property type="match status" value="1"/>
</dbReference>
<dbReference type="PRINTS" id="PR00053">
    <property type="entry name" value="FORKHEAD"/>
</dbReference>
<dbReference type="SMART" id="SM00339">
    <property type="entry name" value="FH"/>
    <property type="match status" value="1"/>
</dbReference>
<dbReference type="SUPFAM" id="SSF46785">
    <property type="entry name" value="Winged helix' DNA-binding domain"/>
    <property type="match status" value="1"/>
</dbReference>
<dbReference type="PROSITE" id="PS00657">
    <property type="entry name" value="FORK_HEAD_1"/>
    <property type="match status" value="1"/>
</dbReference>
<dbReference type="PROSITE" id="PS00658">
    <property type="entry name" value="FORK_HEAD_2"/>
    <property type="match status" value="1"/>
</dbReference>
<dbReference type="PROSITE" id="PS50039">
    <property type="entry name" value="FORK_HEAD_3"/>
    <property type="match status" value="1"/>
</dbReference>
<sequence length="369" mass="40648">MNTFGQQPTNPHAQDLLDMAMYCDHFSLYHQQQNQQLPQRPAAPPATGYGLNEYSSPPSSPYLWLNGPAINSSPYLNGGSGSPYFPAGYGGGQRQFLPPSSGFGVADFPWLSIPNQADLLKMVRPPYSYSSLIAMAIQNTPDKKLTLSQIYNYVAENFPFYKKSKAGWQNSIRHNLSLNDCFKKVARDDHDPGKGNYWTLDPNCEKMFDNGNFRRKRKRKSESVGAGFDEDSNEDKKPLALKSLGSDSPQGASVLEQSSYDAAPEGKSKAPVGSAAQDSSHCFTNFASNMNALINNRTPRQFTAGRGDFSNSRHYLAELTSCPIPSPQISAPQTGSKVPCYPSKQQNNLCTSVMNPFGLNHLYSREGEV</sequence>
<evidence type="ECO:0000250" key="1"/>
<evidence type="ECO:0000255" key="2">
    <source>
        <dbReference type="PROSITE-ProRule" id="PRU00089"/>
    </source>
</evidence>
<evidence type="ECO:0000256" key="3">
    <source>
        <dbReference type="SAM" id="MobiDB-lite"/>
    </source>
</evidence>
<evidence type="ECO:0000269" key="4">
    <source>
    </source>
</evidence>
<evidence type="ECO:0000305" key="5"/>
<evidence type="ECO:0000312" key="6">
    <source>
        <dbReference type="EMBL" id="CAI30462.1"/>
    </source>
</evidence>
<proteinExistence type="evidence at transcript level"/>
<feature type="chain" id="PRO_0000247728" description="Forkhead box protein I2-A">
    <location>
        <begin position="1"/>
        <end position="369"/>
    </location>
</feature>
<feature type="DNA-binding region" description="Fork-head" evidence="2">
    <location>
        <begin position="124"/>
        <end position="218"/>
    </location>
</feature>
<feature type="region of interest" description="Disordered" evidence="3">
    <location>
        <begin position="215"/>
        <end position="252"/>
    </location>
</feature>
<reference evidence="5 6" key="1">
    <citation type="journal article" date="2005" name="Int. J. Dev. Biol.">
        <title>The Fox gene family in Xenopus laevis: FoxI2, FoxM1 and FoxP1 in early development.</title>
        <authorList>
            <person name="Pohl B.S."/>
            <person name="Roessner A."/>
            <person name="Knoechel W."/>
        </authorList>
    </citation>
    <scope>NUCLEOTIDE SEQUENCE [MRNA]</scope>
    <scope>TISSUE SPECIFICITY</scope>
    <scope>DEVELOPMENTAL STAGE</scope>
</reference>
<gene>
    <name type="primary">foxi2-a</name>
</gene>
<organism>
    <name type="scientific">Xenopus laevis</name>
    <name type="common">African clawed frog</name>
    <dbReference type="NCBI Taxonomy" id="8355"/>
    <lineage>
        <taxon>Eukaryota</taxon>
        <taxon>Metazoa</taxon>
        <taxon>Chordata</taxon>
        <taxon>Craniata</taxon>
        <taxon>Vertebrata</taxon>
        <taxon>Euteleostomi</taxon>
        <taxon>Amphibia</taxon>
        <taxon>Batrachia</taxon>
        <taxon>Anura</taxon>
        <taxon>Pipoidea</taxon>
        <taxon>Pipidae</taxon>
        <taxon>Xenopodinae</taxon>
        <taxon>Xenopus</taxon>
        <taxon>Xenopus</taxon>
    </lineage>
</organism>
<keyword id="KW-0010">Activator</keyword>
<keyword id="KW-0238">DNA-binding</keyword>
<keyword id="KW-0539">Nucleus</keyword>
<keyword id="KW-1185">Reference proteome</keyword>
<keyword id="KW-0804">Transcription</keyword>
<keyword id="KW-0805">Transcription regulation</keyword>
<accession>Q5NDM2</accession>